<reference key="1">
    <citation type="journal article" date="2000" name="Nature">
        <title>The genome sequence of the food-borne pathogen Campylobacter jejuni reveals hypervariable sequences.</title>
        <authorList>
            <person name="Parkhill J."/>
            <person name="Wren B.W."/>
            <person name="Mungall K.L."/>
            <person name="Ketley J.M."/>
            <person name="Churcher C.M."/>
            <person name="Basham D."/>
            <person name="Chillingworth T."/>
            <person name="Davies R.M."/>
            <person name="Feltwell T."/>
            <person name="Holroyd S."/>
            <person name="Jagels K."/>
            <person name="Karlyshev A.V."/>
            <person name="Moule S."/>
            <person name="Pallen M.J."/>
            <person name="Penn C.W."/>
            <person name="Quail M.A."/>
            <person name="Rajandream M.A."/>
            <person name="Rutherford K.M."/>
            <person name="van Vliet A.H.M."/>
            <person name="Whitehead S."/>
            <person name="Barrell B.G."/>
        </authorList>
    </citation>
    <scope>NUCLEOTIDE SEQUENCE [LARGE SCALE GENOMIC DNA]</scope>
    <source>
        <strain>ATCC 700819 / NCTC 11168</strain>
    </source>
</reference>
<organism>
    <name type="scientific">Campylobacter jejuni subsp. jejuni serotype O:2 (strain ATCC 700819 / NCTC 11168)</name>
    <dbReference type="NCBI Taxonomy" id="192222"/>
    <lineage>
        <taxon>Bacteria</taxon>
        <taxon>Pseudomonadati</taxon>
        <taxon>Campylobacterota</taxon>
        <taxon>Epsilonproteobacteria</taxon>
        <taxon>Campylobacterales</taxon>
        <taxon>Campylobacteraceae</taxon>
        <taxon>Campylobacter</taxon>
    </lineage>
</organism>
<accession>Q9PNX4</accession>
<accession>Q0P9T8</accession>
<proteinExistence type="inferred from homology"/>
<gene>
    <name type="primary">rpmH</name>
    <name type="ordered locus">Cj0961c</name>
</gene>
<keyword id="KW-1185">Reference proteome</keyword>
<keyword id="KW-0687">Ribonucleoprotein</keyword>
<keyword id="KW-0689">Ribosomal protein</keyword>
<evidence type="ECO:0000305" key="1"/>
<feature type="chain" id="PRO_0000187360" description="Large ribosomal subunit protein bL34">
    <location>
        <begin position="1"/>
        <end position="44"/>
    </location>
</feature>
<protein>
    <recommendedName>
        <fullName evidence="1">Large ribosomal subunit protein bL34</fullName>
    </recommendedName>
    <alternativeName>
        <fullName>50S ribosomal protein L34</fullName>
    </alternativeName>
</protein>
<comment type="similarity">
    <text evidence="1">Belongs to the bacterial ribosomal protein bL34 family.</text>
</comment>
<name>RL34_CAMJE</name>
<dbReference type="EMBL" id="AL111168">
    <property type="protein sequence ID" value="CAL35081.1"/>
    <property type="molecule type" value="Genomic_DNA"/>
</dbReference>
<dbReference type="PIR" id="H81370">
    <property type="entry name" value="H81370"/>
</dbReference>
<dbReference type="RefSeq" id="WP_002776864.1">
    <property type="nucleotide sequence ID" value="NZ_SZUC01000001.1"/>
</dbReference>
<dbReference type="RefSeq" id="YP_002344359.1">
    <property type="nucleotide sequence ID" value="NC_002163.1"/>
</dbReference>
<dbReference type="SMR" id="Q9PNX4"/>
<dbReference type="IntAct" id="Q9PNX4">
    <property type="interactions" value="4"/>
</dbReference>
<dbReference type="STRING" id="192222.Cj0961c"/>
<dbReference type="PaxDb" id="192222-Cj0961c"/>
<dbReference type="EnsemblBacteria" id="CAL35081">
    <property type="protein sequence ID" value="CAL35081"/>
    <property type="gene ID" value="Cj0961c"/>
</dbReference>
<dbReference type="GeneID" id="66544167"/>
<dbReference type="GeneID" id="905034"/>
<dbReference type="KEGG" id="cje:Cj0961c"/>
<dbReference type="PATRIC" id="fig|192222.6.peg.945"/>
<dbReference type="eggNOG" id="COG0230">
    <property type="taxonomic scope" value="Bacteria"/>
</dbReference>
<dbReference type="HOGENOM" id="CLU_129938_2_0_7"/>
<dbReference type="OrthoDB" id="9804164at2"/>
<dbReference type="PRO" id="PR:Q9PNX4"/>
<dbReference type="Proteomes" id="UP000000799">
    <property type="component" value="Chromosome"/>
</dbReference>
<dbReference type="GO" id="GO:1990904">
    <property type="term" value="C:ribonucleoprotein complex"/>
    <property type="evidence" value="ECO:0007669"/>
    <property type="project" value="UniProtKB-KW"/>
</dbReference>
<dbReference type="GO" id="GO:0005840">
    <property type="term" value="C:ribosome"/>
    <property type="evidence" value="ECO:0007669"/>
    <property type="project" value="UniProtKB-KW"/>
</dbReference>
<dbReference type="GO" id="GO:0003735">
    <property type="term" value="F:structural constituent of ribosome"/>
    <property type="evidence" value="ECO:0007669"/>
    <property type="project" value="InterPro"/>
</dbReference>
<dbReference type="GO" id="GO:0006412">
    <property type="term" value="P:translation"/>
    <property type="evidence" value="ECO:0007669"/>
    <property type="project" value="UniProtKB-UniRule"/>
</dbReference>
<dbReference type="FunFam" id="1.10.287.3980:FF:000001">
    <property type="entry name" value="Mitochondrial ribosomal protein L34"/>
    <property type="match status" value="1"/>
</dbReference>
<dbReference type="Gene3D" id="1.10.287.3980">
    <property type="match status" value="1"/>
</dbReference>
<dbReference type="HAMAP" id="MF_00391">
    <property type="entry name" value="Ribosomal_bL34"/>
    <property type="match status" value="1"/>
</dbReference>
<dbReference type="InterPro" id="IPR000271">
    <property type="entry name" value="Ribosomal_bL34"/>
</dbReference>
<dbReference type="InterPro" id="IPR020939">
    <property type="entry name" value="Ribosomal_bL34_CS"/>
</dbReference>
<dbReference type="NCBIfam" id="TIGR01030">
    <property type="entry name" value="rpmH_bact"/>
    <property type="match status" value="1"/>
</dbReference>
<dbReference type="PANTHER" id="PTHR14503:SF4">
    <property type="entry name" value="LARGE RIBOSOMAL SUBUNIT PROTEIN BL34M"/>
    <property type="match status" value="1"/>
</dbReference>
<dbReference type="PANTHER" id="PTHR14503">
    <property type="entry name" value="MITOCHONDRIAL RIBOSOMAL PROTEIN 34 FAMILY MEMBER"/>
    <property type="match status" value="1"/>
</dbReference>
<dbReference type="Pfam" id="PF00468">
    <property type="entry name" value="Ribosomal_L34"/>
    <property type="match status" value="1"/>
</dbReference>
<dbReference type="PROSITE" id="PS00784">
    <property type="entry name" value="RIBOSOMAL_L34"/>
    <property type="match status" value="1"/>
</dbReference>
<sequence length="44" mass="5244">MKRTYQPHGTPRKRTHGFRVRMKTKNGRKVINARRAKGRKRLAV</sequence>